<reference key="1">
    <citation type="journal article" date="2004" name="Science">
        <title>The 1.2-megabase genome sequence of Mimivirus.</title>
        <authorList>
            <person name="Raoult D."/>
            <person name="Audic S."/>
            <person name="Robert C."/>
            <person name="Abergel C."/>
            <person name="Renesto P."/>
            <person name="Ogata H."/>
            <person name="La Scola B."/>
            <person name="Susan M."/>
            <person name="Claverie J.-M."/>
        </authorList>
    </citation>
    <scope>NUCLEOTIDE SEQUENCE [LARGE SCALE GENOMIC DNA]</scope>
    <source>
        <strain>Rowbotham-Bradford</strain>
    </source>
</reference>
<sequence>MSDVTVTPSATSKLTGILKPGSYEIEKGHFSRYFSLNWWQLIVVVGIAISGIAAIANTYDAITGVDKDIEGCENVSNLRKKLEAKFIIIIVLSCLAVVGGIILAWLLRSGTNQRKLLTMGLTTGGILGILYALTIRFRGTSNMVKLGISWVSLLAFVLLGFFINTSGE</sequence>
<comment type="subcellular location">
    <subcellularLocation>
        <location evidence="2">Membrane</location>
        <topology evidence="2">Multi-pass membrane protein</topology>
    </subcellularLocation>
</comment>
<evidence type="ECO:0000255" key="1"/>
<evidence type="ECO:0000305" key="2"/>
<organism>
    <name type="scientific">Acanthamoeba polyphaga mimivirus</name>
    <name type="common">APMV</name>
    <dbReference type="NCBI Taxonomy" id="212035"/>
    <lineage>
        <taxon>Viruses</taxon>
        <taxon>Varidnaviria</taxon>
        <taxon>Bamfordvirae</taxon>
        <taxon>Nucleocytoviricota</taxon>
        <taxon>Megaviricetes</taxon>
        <taxon>Imitervirales</taxon>
        <taxon>Mimiviridae</taxon>
        <taxon>Megamimivirinae</taxon>
        <taxon>Mimivirus</taxon>
        <taxon>Mimivirus bradfordmassiliense</taxon>
    </lineage>
</organism>
<dbReference type="EMBL" id="AY653733">
    <property type="protein sequence ID" value="AAV50777.1"/>
    <property type="molecule type" value="Genomic_DNA"/>
</dbReference>
<dbReference type="KEGG" id="vg:9925144"/>
<dbReference type="OrthoDB" id="25401at10239"/>
<dbReference type="Proteomes" id="UP000001134">
    <property type="component" value="Genome"/>
</dbReference>
<dbReference type="GO" id="GO:0016020">
    <property type="term" value="C:membrane"/>
    <property type="evidence" value="ECO:0007669"/>
    <property type="project" value="UniProtKB-SubCell"/>
</dbReference>
<feature type="chain" id="PRO_0000253920" description="Uncharacterized protein R513">
    <location>
        <begin position="1"/>
        <end position="168"/>
    </location>
</feature>
<feature type="transmembrane region" description="Helical" evidence="1">
    <location>
        <begin position="36"/>
        <end position="56"/>
    </location>
</feature>
<feature type="transmembrane region" description="Helical" evidence="1">
    <location>
        <begin position="86"/>
        <end position="106"/>
    </location>
</feature>
<feature type="transmembrane region" description="Helical" evidence="1">
    <location>
        <begin position="115"/>
        <end position="135"/>
    </location>
</feature>
<feature type="transmembrane region" description="Helical" evidence="1">
    <location>
        <begin position="143"/>
        <end position="163"/>
    </location>
</feature>
<feature type="glycosylation site" description="N-linked (GlcNAc...) asparagine; by host" evidence="1">
    <location>
        <position position="74"/>
    </location>
</feature>
<feature type="glycosylation site" description="N-linked (GlcNAc...) asparagine; by host" evidence="1">
    <location>
        <position position="164"/>
    </location>
</feature>
<organismHost>
    <name type="scientific">Acanthamoeba polyphaga</name>
    <name type="common">Amoeba</name>
    <dbReference type="NCBI Taxonomy" id="5757"/>
</organismHost>
<name>YR513_MIMIV</name>
<protein>
    <recommendedName>
        <fullName>Uncharacterized protein R513</fullName>
    </recommendedName>
</protein>
<proteinExistence type="predicted"/>
<keyword id="KW-0325">Glycoprotein</keyword>
<keyword id="KW-0472">Membrane</keyword>
<keyword id="KW-1185">Reference proteome</keyword>
<keyword id="KW-0812">Transmembrane</keyword>
<keyword id="KW-1133">Transmembrane helix</keyword>
<gene>
    <name type="ordered locus">MIMI_R513</name>
</gene>
<accession>Q5UQ82</accession>